<proteinExistence type="inferred from homology"/>
<gene>
    <name evidence="1" type="primary">hemA</name>
    <name type="ordered locus">rrnAC1708</name>
</gene>
<organism>
    <name type="scientific">Haloarcula marismortui (strain ATCC 43049 / DSM 3752 / JCM 8966 / VKM B-1809)</name>
    <name type="common">Halobacterium marismortui</name>
    <dbReference type="NCBI Taxonomy" id="272569"/>
    <lineage>
        <taxon>Archaea</taxon>
        <taxon>Methanobacteriati</taxon>
        <taxon>Methanobacteriota</taxon>
        <taxon>Stenosarchaea group</taxon>
        <taxon>Halobacteria</taxon>
        <taxon>Halobacteriales</taxon>
        <taxon>Haloarculaceae</taxon>
        <taxon>Haloarcula</taxon>
    </lineage>
</organism>
<comment type="function">
    <text evidence="1">Catalyzes the NADPH-dependent reduction of glutamyl-tRNA(Glu) to glutamate 1-semialdehyde (GSA).</text>
</comment>
<comment type="catalytic activity">
    <reaction evidence="1">
        <text>(S)-4-amino-5-oxopentanoate + tRNA(Glu) + NADP(+) = L-glutamyl-tRNA(Glu) + NADPH + H(+)</text>
        <dbReference type="Rhea" id="RHEA:12344"/>
        <dbReference type="Rhea" id="RHEA-COMP:9663"/>
        <dbReference type="Rhea" id="RHEA-COMP:9680"/>
        <dbReference type="ChEBI" id="CHEBI:15378"/>
        <dbReference type="ChEBI" id="CHEBI:57501"/>
        <dbReference type="ChEBI" id="CHEBI:57783"/>
        <dbReference type="ChEBI" id="CHEBI:58349"/>
        <dbReference type="ChEBI" id="CHEBI:78442"/>
        <dbReference type="ChEBI" id="CHEBI:78520"/>
        <dbReference type="EC" id="1.2.1.70"/>
    </reaction>
</comment>
<comment type="pathway">
    <text evidence="1">Porphyrin-containing compound metabolism; protoporphyrin-IX biosynthesis; 5-aminolevulinate from L-glutamyl-tRNA(Glu): step 1/2.</text>
</comment>
<comment type="subunit">
    <text evidence="1">Homodimer.</text>
</comment>
<comment type="domain">
    <text evidence="1">Possesses an unusual extended V-shaped dimeric structure with each monomer consisting of three distinct domains arranged along a curved 'spinal' alpha-helix. The N-terminal catalytic domain specifically recognizes the glutamate moiety of the substrate. The second domain is the NADPH-binding domain, and the third C-terminal domain is responsible for dimerization.</text>
</comment>
<comment type="miscellaneous">
    <text evidence="1">During catalysis, the active site Cys acts as a nucleophile attacking the alpha-carbonyl group of tRNA-bound glutamate with the formation of a thioester intermediate between enzyme and glutamate, and the concomitant release of tRNA(Glu). The thioester intermediate is finally reduced by direct hydride transfer from NADPH, to form the product GSA.</text>
</comment>
<comment type="similarity">
    <text evidence="1">Belongs to the glutamyl-tRNA reductase family.</text>
</comment>
<comment type="sequence caution" evidence="3">
    <conflict type="erroneous initiation">
        <sequence resource="EMBL-CDS" id="AAV46614"/>
    </conflict>
</comment>
<name>HEM1_HALMA</name>
<reference key="1">
    <citation type="journal article" date="2004" name="Genome Res.">
        <title>Genome sequence of Haloarcula marismortui: a halophilic archaeon from the Dead Sea.</title>
        <authorList>
            <person name="Baliga N.S."/>
            <person name="Bonneau R."/>
            <person name="Facciotti M.T."/>
            <person name="Pan M."/>
            <person name="Glusman G."/>
            <person name="Deutsch E.W."/>
            <person name="Shannon P."/>
            <person name="Chiu Y."/>
            <person name="Weng R.S."/>
            <person name="Gan R.R."/>
            <person name="Hung P."/>
            <person name="Date S.V."/>
            <person name="Marcotte E."/>
            <person name="Hood L."/>
            <person name="Ng W.V."/>
        </authorList>
    </citation>
    <scope>NUCLEOTIDE SEQUENCE [LARGE SCALE GENOMIC DNA]</scope>
    <source>
        <strain>ATCC 43049 / DSM 3752 / JCM 8966 / VKM B-1809</strain>
    </source>
</reference>
<feature type="chain" id="PRO_0000335087" description="Glutamyl-tRNA reductase">
    <location>
        <begin position="1"/>
        <end position="448"/>
    </location>
</feature>
<feature type="region of interest" description="Disordered" evidence="2">
    <location>
        <begin position="406"/>
        <end position="435"/>
    </location>
</feature>
<feature type="active site" description="Nucleophile" evidence="1">
    <location>
        <position position="53"/>
    </location>
</feature>
<feature type="binding site" evidence="1">
    <location>
        <begin position="52"/>
        <end position="55"/>
    </location>
    <ligand>
        <name>substrate</name>
    </ligand>
</feature>
<feature type="binding site" evidence="1">
    <location>
        <position position="105"/>
    </location>
    <ligand>
        <name>substrate</name>
    </ligand>
</feature>
<feature type="binding site" evidence="1">
    <location>
        <begin position="110"/>
        <end position="112"/>
    </location>
    <ligand>
        <name>substrate</name>
    </ligand>
</feature>
<feature type="binding site" evidence="1">
    <location>
        <position position="116"/>
    </location>
    <ligand>
        <name>substrate</name>
    </ligand>
</feature>
<feature type="binding site" evidence="1">
    <location>
        <begin position="184"/>
        <end position="189"/>
    </location>
    <ligand>
        <name>NADP(+)</name>
        <dbReference type="ChEBI" id="CHEBI:58349"/>
    </ligand>
</feature>
<feature type="site" description="Important for activity" evidence="1">
    <location>
        <position position="95"/>
    </location>
</feature>
<sequence>MRGDTGAIVGVCISHERASVDQLETAAADSERHAVESLLANPAVEEAIALQTCNRTEGYVVVSDHEDGLEALELFTRAVPDDVVVEMGHEESLRHLLRVAAGLESIVLGEDQILGQLRTAYETARGVGGIGPMLEDGVTKAIHVGERARTETKINEGVVSIASAAVRLLKQESSLTDGTALVVGAGEMGQLAAEALSEEVDRLLVANRTVPHAEHIAESVDIDASALALDGIEAAVSEASAVISATGSGDQVFDIGTFSDSGDVSIVDIAQPRDVPAGADRLPSVTVYDLDALESVTAETRNKRQRAAEAVERIVDEEFDRLLTQYKRKRADRVISTMYESAEQVKAAEINSALSAADFDDEQAEVVEAMADAIVSQILAAPTKSLRDAAEEDDWSTIHTALQLFDPDFGGPDQATPPEFTKGMSVEDIPDGMRDEIPNAMLDRLSDD</sequence>
<accession>Q5V1I8</accession>
<protein>
    <recommendedName>
        <fullName evidence="1">Glutamyl-tRNA reductase</fullName>
        <shortName evidence="1">GluTR</shortName>
        <ecNumber evidence="1">1.2.1.70</ecNumber>
    </recommendedName>
</protein>
<dbReference type="EC" id="1.2.1.70" evidence="1"/>
<dbReference type="EMBL" id="AY596297">
    <property type="protein sequence ID" value="AAV46614.1"/>
    <property type="status" value="ALT_INIT"/>
    <property type="molecule type" value="Genomic_DNA"/>
</dbReference>
<dbReference type="RefSeq" id="WP_004957688.1">
    <property type="nucleotide sequence ID" value="NZ_CP039138.1"/>
</dbReference>
<dbReference type="SMR" id="Q5V1I8"/>
<dbReference type="STRING" id="272569.rrnAC1708"/>
<dbReference type="PaxDb" id="272569-rrnAC1708"/>
<dbReference type="EnsemblBacteria" id="AAV46614">
    <property type="protein sequence ID" value="AAV46614"/>
    <property type="gene ID" value="rrnAC1708"/>
</dbReference>
<dbReference type="GeneID" id="64821723"/>
<dbReference type="KEGG" id="hma:rrnAC1708"/>
<dbReference type="PATRIC" id="fig|272569.17.peg.2392"/>
<dbReference type="eggNOG" id="arCOG01036">
    <property type="taxonomic scope" value="Archaea"/>
</dbReference>
<dbReference type="HOGENOM" id="CLU_035113_0_1_2"/>
<dbReference type="UniPathway" id="UPA00251">
    <property type="reaction ID" value="UER00316"/>
</dbReference>
<dbReference type="Proteomes" id="UP000001169">
    <property type="component" value="Chromosome I"/>
</dbReference>
<dbReference type="GO" id="GO:0008883">
    <property type="term" value="F:glutamyl-tRNA reductase activity"/>
    <property type="evidence" value="ECO:0007669"/>
    <property type="project" value="UniProtKB-UniRule"/>
</dbReference>
<dbReference type="GO" id="GO:0050661">
    <property type="term" value="F:NADP binding"/>
    <property type="evidence" value="ECO:0007669"/>
    <property type="project" value="InterPro"/>
</dbReference>
<dbReference type="GO" id="GO:0019353">
    <property type="term" value="P:protoporphyrinogen IX biosynthetic process from glutamate"/>
    <property type="evidence" value="ECO:0007669"/>
    <property type="project" value="TreeGrafter"/>
</dbReference>
<dbReference type="CDD" id="cd05213">
    <property type="entry name" value="NAD_bind_Glutamyl_tRNA_reduct"/>
    <property type="match status" value="1"/>
</dbReference>
<dbReference type="FunFam" id="3.30.460.30:FF:000001">
    <property type="entry name" value="Glutamyl-tRNA reductase"/>
    <property type="match status" value="1"/>
</dbReference>
<dbReference type="Gene3D" id="3.30.460.30">
    <property type="entry name" value="Glutamyl-tRNA reductase, N-terminal domain"/>
    <property type="match status" value="1"/>
</dbReference>
<dbReference type="Gene3D" id="3.40.50.720">
    <property type="entry name" value="NAD(P)-binding Rossmann-like Domain"/>
    <property type="match status" value="1"/>
</dbReference>
<dbReference type="HAMAP" id="MF_00087">
    <property type="entry name" value="Glu_tRNA_reductase"/>
    <property type="match status" value="1"/>
</dbReference>
<dbReference type="InterPro" id="IPR000343">
    <property type="entry name" value="4pyrrol_synth_GluRdtase"/>
</dbReference>
<dbReference type="InterPro" id="IPR015896">
    <property type="entry name" value="4pyrrol_synth_GluRdtase_dimer"/>
</dbReference>
<dbReference type="InterPro" id="IPR015895">
    <property type="entry name" value="4pyrrol_synth_GluRdtase_N"/>
</dbReference>
<dbReference type="InterPro" id="IPR018214">
    <property type="entry name" value="GluRdtase_CS"/>
</dbReference>
<dbReference type="InterPro" id="IPR036453">
    <property type="entry name" value="GluRdtase_dimer_dom_sf"/>
</dbReference>
<dbReference type="InterPro" id="IPR036343">
    <property type="entry name" value="GluRdtase_N_sf"/>
</dbReference>
<dbReference type="InterPro" id="IPR036291">
    <property type="entry name" value="NAD(P)-bd_dom_sf"/>
</dbReference>
<dbReference type="InterPro" id="IPR006151">
    <property type="entry name" value="Shikm_DH/Glu-tRNA_Rdtase"/>
</dbReference>
<dbReference type="NCBIfam" id="TIGR01035">
    <property type="entry name" value="hemA"/>
    <property type="match status" value="1"/>
</dbReference>
<dbReference type="PANTHER" id="PTHR43013">
    <property type="entry name" value="GLUTAMYL-TRNA REDUCTASE"/>
    <property type="match status" value="1"/>
</dbReference>
<dbReference type="PANTHER" id="PTHR43013:SF1">
    <property type="entry name" value="GLUTAMYL-TRNA REDUCTASE"/>
    <property type="match status" value="1"/>
</dbReference>
<dbReference type="Pfam" id="PF00745">
    <property type="entry name" value="GlutR_dimer"/>
    <property type="match status" value="1"/>
</dbReference>
<dbReference type="Pfam" id="PF05201">
    <property type="entry name" value="GlutR_N"/>
    <property type="match status" value="1"/>
</dbReference>
<dbReference type="Pfam" id="PF01488">
    <property type="entry name" value="Shikimate_DH"/>
    <property type="match status" value="1"/>
</dbReference>
<dbReference type="PIRSF" id="PIRSF000445">
    <property type="entry name" value="4pyrrol_synth_GluRdtase"/>
    <property type="match status" value="1"/>
</dbReference>
<dbReference type="SUPFAM" id="SSF69742">
    <property type="entry name" value="Glutamyl tRNA-reductase catalytic, N-terminal domain"/>
    <property type="match status" value="1"/>
</dbReference>
<dbReference type="SUPFAM" id="SSF69075">
    <property type="entry name" value="Glutamyl tRNA-reductase dimerization domain"/>
    <property type="match status" value="1"/>
</dbReference>
<dbReference type="SUPFAM" id="SSF51735">
    <property type="entry name" value="NAD(P)-binding Rossmann-fold domains"/>
    <property type="match status" value="1"/>
</dbReference>
<dbReference type="PROSITE" id="PS00747">
    <property type="entry name" value="GLUTR"/>
    <property type="match status" value="1"/>
</dbReference>
<keyword id="KW-0521">NADP</keyword>
<keyword id="KW-0560">Oxidoreductase</keyword>
<keyword id="KW-0627">Porphyrin biosynthesis</keyword>
<keyword id="KW-1185">Reference proteome</keyword>
<evidence type="ECO:0000255" key="1">
    <source>
        <dbReference type="HAMAP-Rule" id="MF_00087"/>
    </source>
</evidence>
<evidence type="ECO:0000256" key="2">
    <source>
        <dbReference type="SAM" id="MobiDB-lite"/>
    </source>
</evidence>
<evidence type="ECO:0000305" key="3"/>